<reference key="1">
    <citation type="journal article" date="2005" name="Genome Res.">
        <title>Sequence, annotation, and analysis of synteny between rice chromosome 3 and diverged grass species.</title>
        <authorList>
            <consortium name="The rice chromosome 3 sequencing consortium"/>
            <person name="Buell C.R."/>
            <person name="Yuan Q."/>
            <person name="Ouyang S."/>
            <person name="Liu J."/>
            <person name="Zhu W."/>
            <person name="Wang A."/>
            <person name="Maiti R."/>
            <person name="Haas B."/>
            <person name="Wortman J."/>
            <person name="Pertea M."/>
            <person name="Jones K.M."/>
            <person name="Kim M."/>
            <person name="Overton L."/>
            <person name="Tsitrin T."/>
            <person name="Fadrosh D."/>
            <person name="Bera J."/>
            <person name="Weaver B."/>
            <person name="Jin S."/>
            <person name="Johri S."/>
            <person name="Reardon M."/>
            <person name="Webb K."/>
            <person name="Hill J."/>
            <person name="Moffat K."/>
            <person name="Tallon L."/>
            <person name="Van Aken S."/>
            <person name="Lewis M."/>
            <person name="Utterback T."/>
            <person name="Feldblyum T."/>
            <person name="Zismann V."/>
            <person name="Iobst S."/>
            <person name="Hsiao J."/>
            <person name="de Vazeille A.R."/>
            <person name="Salzberg S.L."/>
            <person name="White O."/>
            <person name="Fraser C.M."/>
            <person name="Yu Y."/>
            <person name="Kim H."/>
            <person name="Rambo T."/>
            <person name="Currie J."/>
            <person name="Collura K."/>
            <person name="Kernodle-Thompson S."/>
            <person name="Wei F."/>
            <person name="Kudrna K."/>
            <person name="Ammiraju J.S.S."/>
            <person name="Luo M."/>
            <person name="Goicoechea J.L."/>
            <person name="Wing R.A."/>
            <person name="Henry D."/>
            <person name="Oates R."/>
            <person name="Palmer M."/>
            <person name="Pries G."/>
            <person name="Saski C."/>
            <person name="Simmons J."/>
            <person name="Soderlund C."/>
            <person name="Nelson W."/>
            <person name="de la Bastide M."/>
            <person name="Spiegel L."/>
            <person name="Nascimento L."/>
            <person name="Huang E."/>
            <person name="Preston R."/>
            <person name="Zutavern T."/>
            <person name="Palmer L."/>
            <person name="O'Shaughnessy A."/>
            <person name="Dike S."/>
            <person name="McCombie W.R."/>
            <person name="Minx P."/>
            <person name="Cordum H."/>
            <person name="Wilson R."/>
            <person name="Jin W."/>
            <person name="Lee H.R."/>
            <person name="Jiang J."/>
            <person name="Jackson S."/>
        </authorList>
    </citation>
    <scope>NUCLEOTIDE SEQUENCE [LARGE SCALE GENOMIC DNA]</scope>
    <source>
        <strain>cv. Nipponbare</strain>
    </source>
</reference>
<reference key="2">
    <citation type="journal article" date="2005" name="Nature">
        <title>The map-based sequence of the rice genome.</title>
        <authorList>
            <consortium name="International rice genome sequencing project (IRGSP)"/>
        </authorList>
    </citation>
    <scope>NUCLEOTIDE SEQUENCE [LARGE SCALE GENOMIC DNA]</scope>
    <source>
        <strain>cv. Nipponbare</strain>
    </source>
</reference>
<reference key="3">
    <citation type="journal article" date="2013" name="Rice">
        <title>Improvement of the Oryza sativa Nipponbare reference genome using next generation sequence and optical map data.</title>
        <authorList>
            <person name="Kawahara Y."/>
            <person name="de la Bastide M."/>
            <person name="Hamilton J.P."/>
            <person name="Kanamori H."/>
            <person name="McCombie W.R."/>
            <person name="Ouyang S."/>
            <person name="Schwartz D.C."/>
            <person name="Tanaka T."/>
            <person name="Wu J."/>
            <person name="Zhou S."/>
            <person name="Childs K.L."/>
            <person name="Davidson R.M."/>
            <person name="Lin H."/>
            <person name="Quesada-Ocampo L."/>
            <person name="Vaillancourt B."/>
            <person name="Sakai H."/>
            <person name="Lee S.S."/>
            <person name="Kim J."/>
            <person name="Numa H."/>
            <person name="Itoh T."/>
            <person name="Buell C.R."/>
            <person name="Matsumoto T."/>
        </authorList>
    </citation>
    <scope>GENOME REANNOTATION</scope>
    <source>
        <strain>cv. Nipponbare</strain>
    </source>
</reference>
<reference key="4">
    <citation type="journal article" date="2005" name="PLoS Biol.">
        <title>The genomes of Oryza sativa: a history of duplications.</title>
        <authorList>
            <person name="Yu J."/>
            <person name="Wang J."/>
            <person name="Lin W."/>
            <person name="Li S."/>
            <person name="Li H."/>
            <person name="Zhou J."/>
            <person name="Ni P."/>
            <person name="Dong W."/>
            <person name="Hu S."/>
            <person name="Zeng C."/>
            <person name="Zhang J."/>
            <person name="Zhang Y."/>
            <person name="Li R."/>
            <person name="Xu Z."/>
            <person name="Li S."/>
            <person name="Li X."/>
            <person name="Zheng H."/>
            <person name="Cong L."/>
            <person name="Lin L."/>
            <person name="Yin J."/>
            <person name="Geng J."/>
            <person name="Li G."/>
            <person name="Shi J."/>
            <person name="Liu J."/>
            <person name="Lv H."/>
            <person name="Li J."/>
            <person name="Wang J."/>
            <person name="Deng Y."/>
            <person name="Ran L."/>
            <person name="Shi X."/>
            <person name="Wang X."/>
            <person name="Wu Q."/>
            <person name="Li C."/>
            <person name="Ren X."/>
            <person name="Wang J."/>
            <person name="Wang X."/>
            <person name="Li D."/>
            <person name="Liu D."/>
            <person name="Zhang X."/>
            <person name="Ji Z."/>
            <person name="Zhao W."/>
            <person name="Sun Y."/>
            <person name="Zhang Z."/>
            <person name="Bao J."/>
            <person name="Han Y."/>
            <person name="Dong L."/>
            <person name="Ji J."/>
            <person name="Chen P."/>
            <person name="Wu S."/>
            <person name="Liu J."/>
            <person name="Xiao Y."/>
            <person name="Bu D."/>
            <person name="Tan J."/>
            <person name="Yang L."/>
            <person name="Ye C."/>
            <person name="Zhang J."/>
            <person name="Xu J."/>
            <person name="Zhou Y."/>
            <person name="Yu Y."/>
            <person name="Zhang B."/>
            <person name="Zhuang S."/>
            <person name="Wei H."/>
            <person name="Liu B."/>
            <person name="Lei M."/>
            <person name="Yu H."/>
            <person name="Li Y."/>
            <person name="Xu H."/>
            <person name="Wei S."/>
            <person name="He X."/>
            <person name="Fang L."/>
            <person name="Zhang Z."/>
            <person name="Zhang Y."/>
            <person name="Huang X."/>
            <person name="Su Z."/>
            <person name="Tong W."/>
            <person name="Li J."/>
            <person name="Tong Z."/>
            <person name="Li S."/>
            <person name="Ye J."/>
            <person name="Wang L."/>
            <person name="Fang L."/>
            <person name="Lei T."/>
            <person name="Chen C.-S."/>
            <person name="Chen H.-C."/>
            <person name="Xu Z."/>
            <person name="Li H."/>
            <person name="Huang H."/>
            <person name="Zhang F."/>
            <person name="Xu H."/>
            <person name="Li N."/>
            <person name="Zhao C."/>
            <person name="Li S."/>
            <person name="Dong L."/>
            <person name="Huang Y."/>
            <person name="Li L."/>
            <person name="Xi Y."/>
            <person name="Qi Q."/>
            <person name="Li W."/>
            <person name="Zhang B."/>
            <person name="Hu W."/>
            <person name="Zhang Y."/>
            <person name="Tian X."/>
            <person name="Jiao Y."/>
            <person name="Liang X."/>
            <person name="Jin J."/>
            <person name="Gao L."/>
            <person name="Zheng W."/>
            <person name="Hao B."/>
            <person name="Liu S.-M."/>
            <person name="Wang W."/>
            <person name="Yuan L."/>
            <person name="Cao M."/>
            <person name="McDermott J."/>
            <person name="Samudrala R."/>
            <person name="Wang J."/>
            <person name="Wong G.K.-S."/>
            <person name="Yang H."/>
        </authorList>
    </citation>
    <scope>NUCLEOTIDE SEQUENCE [LARGE SCALE GENOMIC DNA]</scope>
    <source>
        <strain>cv. Nipponbare</strain>
    </source>
</reference>
<evidence type="ECO:0000255" key="1">
    <source>
        <dbReference type="PROSITE-ProRule" id="PRU00326"/>
    </source>
</evidence>
<evidence type="ECO:0000256" key="2">
    <source>
        <dbReference type="SAM" id="MobiDB-lite"/>
    </source>
</evidence>
<protein>
    <recommendedName>
        <fullName>B3 domain-containing protein Os03g0619800</fullName>
    </recommendedName>
</protein>
<name>Y3982_ORYSJ</name>
<accession>Q6AV21</accession>
<organism>
    <name type="scientific">Oryza sativa subsp. japonica</name>
    <name type="common">Rice</name>
    <dbReference type="NCBI Taxonomy" id="39947"/>
    <lineage>
        <taxon>Eukaryota</taxon>
        <taxon>Viridiplantae</taxon>
        <taxon>Streptophyta</taxon>
        <taxon>Embryophyta</taxon>
        <taxon>Tracheophyta</taxon>
        <taxon>Spermatophyta</taxon>
        <taxon>Magnoliopsida</taxon>
        <taxon>Liliopsida</taxon>
        <taxon>Poales</taxon>
        <taxon>Poaceae</taxon>
        <taxon>BOP clade</taxon>
        <taxon>Oryzoideae</taxon>
        <taxon>Oryzeae</taxon>
        <taxon>Oryzinae</taxon>
        <taxon>Oryza</taxon>
        <taxon>Oryza sativa</taxon>
    </lineage>
</organism>
<sequence>MAGGNTHRKKSCACCKEYLEHLGGKMRCFLRRMAADSMHSMIMPDRFVSHFGGKIPGTIKLESPNGILYVVEVTECMNKTLLQCGWEAFVDAHNIKEGESLLFRHIENSRYEVLILDSDDCEKVFSCAGIRNGSCVQDKTVDPVDSSGSSSNDTTQSSRSRNTENLTAMCSSSEKSGEDSPSGYEFHESVEPQTPSGSDYVLSRRTYLSEAQKERVVTHIQDIQPEITVFVAVMKKCNLQSPAPYLVISSRYASVHFPRETATITLQRPSKRKKWYPRFYKRIDKSDHMLRGQWQNFVHDNCLQEEDICLFVPTKGGRNFAFTVHLLQAEVTHSRDGTDVHKIGSSQNKRNSKMASQVHIKEAPGGDVSSESNKHGVSHESLESEDSDGPSEPPYISSMRRRLSQLQKKTVEEKVRAIQSEIPICVATISKLAGSGGKGKFRGLELSSRYAASYLPDKNHQTLVLQCKGMIWQINLVVRRRYTKGKRWFLTAGWRKFAHDNRLRVGDFCLFELKKKKKLTMEVHIISNLQRYPEVE</sequence>
<proteinExistence type="inferred from homology"/>
<keyword id="KW-0238">DNA-binding</keyword>
<keyword id="KW-0539">Nucleus</keyword>
<keyword id="KW-1185">Reference proteome</keyword>
<keyword id="KW-0677">Repeat</keyword>
<keyword id="KW-0804">Transcription</keyword>
<keyword id="KW-0805">Transcription regulation</keyword>
<dbReference type="EMBL" id="AC107206">
    <property type="protein sequence ID" value="AAT77042.1"/>
    <property type="molecule type" value="Genomic_DNA"/>
</dbReference>
<dbReference type="EMBL" id="DP000009">
    <property type="protein sequence ID" value="ABF97660.1"/>
    <property type="molecule type" value="Genomic_DNA"/>
</dbReference>
<dbReference type="EMBL" id="AP014959">
    <property type="status" value="NOT_ANNOTATED_CDS"/>
    <property type="molecule type" value="Genomic_DNA"/>
</dbReference>
<dbReference type="EMBL" id="CM000140">
    <property type="protein sequence ID" value="EAZ27806.1"/>
    <property type="molecule type" value="Genomic_DNA"/>
</dbReference>
<dbReference type="RefSeq" id="XP_015629380.1">
    <property type="nucleotide sequence ID" value="XM_015773894.1"/>
</dbReference>
<dbReference type="RefSeq" id="XP_015629381.1">
    <property type="nucleotide sequence ID" value="XM_015773895.1"/>
</dbReference>
<dbReference type="RefSeq" id="XP_015629382.1">
    <property type="nucleotide sequence ID" value="XM_015773896.1"/>
</dbReference>
<dbReference type="SMR" id="Q6AV21"/>
<dbReference type="FunCoup" id="Q6AV21">
    <property type="interactions" value="1686"/>
</dbReference>
<dbReference type="STRING" id="39947.Q6AV21"/>
<dbReference type="PaxDb" id="39947-Q6AV21"/>
<dbReference type="InParanoid" id="Q6AV21"/>
<dbReference type="OrthoDB" id="676899at2759"/>
<dbReference type="Proteomes" id="UP000000763">
    <property type="component" value="Chromosome 3"/>
</dbReference>
<dbReference type="Proteomes" id="UP000007752">
    <property type="component" value="Chromosome 3"/>
</dbReference>
<dbReference type="Proteomes" id="UP000059680">
    <property type="component" value="Chromosome 3"/>
</dbReference>
<dbReference type="GO" id="GO:0005634">
    <property type="term" value="C:nucleus"/>
    <property type="evidence" value="ECO:0007669"/>
    <property type="project" value="UniProtKB-SubCell"/>
</dbReference>
<dbReference type="GO" id="GO:0003677">
    <property type="term" value="F:DNA binding"/>
    <property type="evidence" value="ECO:0007669"/>
    <property type="project" value="UniProtKB-KW"/>
</dbReference>
<dbReference type="CDD" id="cd10017">
    <property type="entry name" value="B3_DNA"/>
    <property type="match status" value="3"/>
</dbReference>
<dbReference type="Gene3D" id="2.40.330.10">
    <property type="entry name" value="DNA-binding pseudobarrel domain"/>
    <property type="match status" value="3"/>
</dbReference>
<dbReference type="InterPro" id="IPR003340">
    <property type="entry name" value="B3_DNA-bd"/>
</dbReference>
<dbReference type="InterPro" id="IPR015300">
    <property type="entry name" value="DNA-bd_pseudobarrel_sf"/>
</dbReference>
<dbReference type="InterPro" id="IPR044837">
    <property type="entry name" value="REM16-like"/>
</dbReference>
<dbReference type="PANTHER" id="PTHR31391:SF23">
    <property type="entry name" value="B3 DOMAIN-CONTAINING PROTEIN OS03G0619800"/>
    <property type="match status" value="1"/>
</dbReference>
<dbReference type="PANTHER" id="PTHR31391">
    <property type="entry name" value="B3 DOMAIN-CONTAINING PROTEIN OS11G0197600-RELATED"/>
    <property type="match status" value="1"/>
</dbReference>
<dbReference type="Pfam" id="PF02362">
    <property type="entry name" value="B3"/>
    <property type="match status" value="3"/>
</dbReference>
<dbReference type="SMART" id="SM01019">
    <property type="entry name" value="B3"/>
    <property type="match status" value="3"/>
</dbReference>
<dbReference type="SUPFAM" id="SSF101936">
    <property type="entry name" value="DNA-binding pseudobarrel domain"/>
    <property type="match status" value="3"/>
</dbReference>
<dbReference type="PROSITE" id="PS50863">
    <property type="entry name" value="B3"/>
    <property type="match status" value="3"/>
</dbReference>
<feature type="chain" id="PRO_0000378055" description="B3 domain-containing protein Os03g0619800">
    <location>
        <begin position="1"/>
        <end position="536"/>
    </location>
</feature>
<feature type="DNA-binding region" description="TF-B3 1" evidence="1">
    <location>
        <begin position="26"/>
        <end position="119"/>
    </location>
</feature>
<feature type="DNA-binding region" description="TF-B3 2" evidence="1">
    <location>
        <begin position="231"/>
        <end position="330"/>
    </location>
</feature>
<feature type="DNA-binding region" description="TF-B3 3" evidence="1">
    <location>
        <begin position="429"/>
        <end position="529"/>
    </location>
</feature>
<feature type="region of interest" description="Disordered" evidence="2">
    <location>
        <begin position="138"/>
        <end position="199"/>
    </location>
</feature>
<feature type="region of interest" description="Disordered" evidence="2">
    <location>
        <begin position="335"/>
        <end position="396"/>
    </location>
</feature>
<feature type="compositionally biased region" description="Low complexity" evidence="2">
    <location>
        <begin position="145"/>
        <end position="160"/>
    </location>
</feature>
<feature type="compositionally biased region" description="Low complexity" evidence="2">
    <location>
        <begin position="171"/>
        <end position="183"/>
    </location>
</feature>
<feature type="compositionally biased region" description="Polar residues" evidence="2">
    <location>
        <begin position="344"/>
        <end position="355"/>
    </location>
</feature>
<feature type="compositionally biased region" description="Basic and acidic residues" evidence="2">
    <location>
        <begin position="372"/>
        <end position="382"/>
    </location>
</feature>
<comment type="subcellular location">
    <subcellularLocation>
        <location evidence="1">Nucleus</location>
    </subcellularLocation>
</comment>
<gene>
    <name type="ordered locus">Os03g0619800</name>
    <name type="ordered locus">Os03g0619825</name>
    <name type="ordered locus">LOC_Os03g42240</name>
    <name type="ORF">OsJ_11753</name>
    <name type="ORF">OSJNBa0063J18.21</name>
</gene>